<dbReference type="EMBL" id="CP001390">
    <property type="protein sequence ID" value="ACM19544.1"/>
    <property type="molecule type" value="Genomic_DNA"/>
</dbReference>
<dbReference type="RefSeq" id="WP_012646273.1">
    <property type="nucleotide sequence ID" value="NC_011979.1"/>
</dbReference>
<dbReference type="SMR" id="B9M3D4"/>
<dbReference type="STRING" id="316067.Geob_1184"/>
<dbReference type="KEGG" id="geo:Geob_1184"/>
<dbReference type="eggNOG" id="COG3132">
    <property type="taxonomic scope" value="Bacteria"/>
</dbReference>
<dbReference type="HOGENOM" id="CLU_057831_1_0_7"/>
<dbReference type="OrthoDB" id="9784785at2"/>
<dbReference type="Proteomes" id="UP000007721">
    <property type="component" value="Chromosome"/>
</dbReference>
<dbReference type="Gene3D" id="1.10.10.10">
    <property type="entry name" value="Winged helix-like DNA-binding domain superfamily/Winged helix DNA-binding domain"/>
    <property type="match status" value="2"/>
</dbReference>
<dbReference type="HAMAP" id="MF_01584">
    <property type="entry name" value="UPF0502"/>
    <property type="match status" value="1"/>
</dbReference>
<dbReference type="InterPro" id="IPR007432">
    <property type="entry name" value="DUF480"/>
</dbReference>
<dbReference type="InterPro" id="IPR036388">
    <property type="entry name" value="WH-like_DNA-bd_sf"/>
</dbReference>
<dbReference type="InterPro" id="IPR036390">
    <property type="entry name" value="WH_DNA-bd_sf"/>
</dbReference>
<dbReference type="PANTHER" id="PTHR38768">
    <property type="entry name" value="UPF0502 PROTEIN YCEH"/>
    <property type="match status" value="1"/>
</dbReference>
<dbReference type="PANTHER" id="PTHR38768:SF1">
    <property type="entry name" value="UPF0502 PROTEIN YCEH"/>
    <property type="match status" value="1"/>
</dbReference>
<dbReference type="Pfam" id="PF04337">
    <property type="entry name" value="DUF480"/>
    <property type="match status" value="1"/>
</dbReference>
<dbReference type="SUPFAM" id="SSF46785">
    <property type="entry name" value="Winged helix' DNA-binding domain"/>
    <property type="match status" value="2"/>
</dbReference>
<accession>B9M3D4</accession>
<organism>
    <name type="scientific">Geotalea daltonii (strain DSM 22248 / JCM 15807 / FRC-32)</name>
    <name type="common">Geobacter daltonii</name>
    <dbReference type="NCBI Taxonomy" id="316067"/>
    <lineage>
        <taxon>Bacteria</taxon>
        <taxon>Pseudomonadati</taxon>
        <taxon>Thermodesulfobacteriota</taxon>
        <taxon>Desulfuromonadia</taxon>
        <taxon>Geobacterales</taxon>
        <taxon>Geobacteraceae</taxon>
        <taxon>Geotalea</taxon>
    </lineage>
</organism>
<feature type="chain" id="PRO_1000185665" description="UPF0502 protein Geob_1184">
    <location>
        <begin position="1"/>
        <end position="218"/>
    </location>
</feature>
<evidence type="ECO:0000255" key="1">
    <source>
        <dbReference type="HAMAP-Rule" id="MF_01584"/>
    </source>
</evidence>
<gene>
    <name type="ordered locus">Geob_1184</name>
</gene>
<protein>
    <recommendedName>
        <fullName evidence="1">UPF0502 protein Geob_1184</fullName>
    </recommendedName>
</protein>
<keyword id="KW-1185">Reference proteome</keyword>
<reference key="1">
    <citation type="submission" date="2009-01" db="EMBL/GenBank/DDBJ databases">
        <title>Complete sequence of Geobacter sp. FRC-32.</title>
        <authorList>
            <consortium name="US DOE Joint Genome Institute"/>
            <person name="Lucas S."/>
            <person name="Copeland A."/>
            <person name="Lapidus A."/>
            <person name="Glavina del Rio T."/>
            <person name="Dalin E."/>
            <person name="Tice H."/>
            <person name="Bruce D."/>
            <person name="Goodwin L."/>
            <person name="Pitluck S."/>
            <person name="Saunders E."/>
            <person name="Brettin T."/>
            <person name="Detter J.C."/>
            <person name="Han C."/>
            <person name="Larimer F."/>
            <person name="Land M."/>
            <person name="Hauser L."/>
            <person name="Kyrpides N."/>
            <person name="Ovchinnikova G."/>
            <person name="Kostka J."/>
            <person name="Richardson P."/>
        </authorList>
    </citation>
    <scope>NUCLEOTIDE SEQUENCE [LARGE SCALE GENOMIC DNA]</scope>
    <source>
        <strain>DSM 22248 / JCM 15807 / FRC-32</strain>
    </source>
</reference>
<proteinExistence type="inferred from homology"/>
<comment type="similarity">
    <text evidence="1">Belongs to the UPF0502 family.</text>
</comment>
<name>Y1184_GEODF</name>
<sequence length="218" mass="24614">MDVTLNEVEVRVLGSLIEKELTTPEYYPLSLNALTNACNQKSNRDPVLNLDEGEVVRALDSLKFKQLALLSGEGGRVPKYRHALMEKLRLDPPELAVLAELLLRGPQTVGELRTRGERMHPFPDLPAIEEVLEELMARTPALVMRLPRQPGRKDSRYAQLFAGEPQTAAEQSPPPEAARLRVVAENERIGHLEEEVVHLRGEVAELRRLVEEFKSQFE</sequence>